<protein>
    <recommendedName>
        <fullName evidence="1">Universal stress protein B homolog</fullName>
    </recommendedName>
</protein>
<reference key="1">
    <citation type="submission" date="2007-03" db="EMBL/GenBank/DDBJ databases">
        <authorList>
            <person name="Heidelberg J."/>
        </authorList>
    </citation>
    <scope>NUCLEOTIDE SEQUENCE [LARGE SCALE GENOMIC DNA]</scope>
    <source>
        <strain>ATCC 39541 / Classical Ogawa 395 / O395</strain>
    </source>
</reference>
<reference key="2">
    <citation type="journal article" date="2008" name="PLoS ONE">
        <title>A recalibrated molecular clock and independent origins for the cholera pandemic clones.</title>
        <authorList>
            <person name="Feng L."/>
            <person name="Reeves P.R."/>
            <person name="Lan R."/>
            <person name="Ren Y."/>
            <person name="Gao C."/>
            <person name="Zhou Z."/>
            <person name="Ren Y."/>
            <person name="Cheng J."/>
            <person name="Wang W."/>
            <person name="Wang J."/>
            <person name="Qian W."/>
            <person name="Li D."/>
            <person name="Wang L."/>
        </authorList>
    </citation>
    <scope>NUCLEOTIDE SEQUENCE [LARGE SCALE GENOMIC DNA]</scope>
    <source>
        <strain>ATCC 39541 / Classical Ogawa 395 / O395</strain>
    </source>
</reference>
<gene>
    <name evidence="1" type="primary">uspB</name>
    <name type="ordered locus">VC0395_A2436</name>
    <name type="ordered locus">VC395_0101</name>
</gene>
<proteinExistence type="inferred from homology"/>
<accession>A5F4E9</accession>
<accession>C3M2G5</accession>
<dbReference type="EMBL" id="CP000627">
    <property type="protein sequence ID" value="ABQ21621.1"/>
    <property type="molecule type" value="Genomic_DNA"/>
</dbReference>
<dbReference type="EMBL" id="CP001235">
    <property type="protein sequence ID" value="ACP08129.1"/>
    <property type="molecule type" value="Genomic_DNA"/>
</dbReference>
<dbReference type="RefSeq" id="WP_000623073.1">
    <property type="nucleotide sequence ID" value="NZ_JAACZH010000014.1"/>
</dbReference>
<dbReference type="GeneID" id="89513162"/>
<dbReference type="KEGG" id="vco:VC0395_A2436"/>
<dbReference type="KEGG" id="vcr:VC395_0101"/>
<dbReference type="PATRIC" id="fig|345073.21.peg.93"/>
<dbReference type="eggNOG" id="ENOG502ZP3V">
    <property type="taxonomic scope" value="Bacteria"/>
</dbReference>
<dbReference type="HOGENOM" id="CLU_151816_0_0_6"/>
<dbReference type="OrthoDB" id="6432605at2"/>
<dbReference type="Proteomes" id="UP000000249">
    <property type="component" value="Chromosome 2"/>
</dbReference>
<dbReference type="GO" id="GO:0005886">
    <property type="term" value="C:plasma membrane"/>
    <property type="evidence" value="ECO:0007669"/>
    <property type="project" value="UniProtKB-SubCell"/>
</dbReference>
<dbReference type="HAMAP" id="MF_01088">
    <property type="entry name" value="UspB"/>
    <property type="match status" value="1"/>
</dbReference>
<dbReference type="InterPro" id="IPR019598">
    <property type="entry name" value="Universal_stress_protein_B"/>
</dbReference>
<dbReference type="NCBIfam" id="NF003435">
    <property type="entry name" value="PRK04960.1"/>
    <property type="match status" value="1"/>
</dbReference>
<dbReference type="Pfam" id="PF10625">
    <property type="entry name" value="UspB"/>
    <property type="match status" value="1"/>
</dbReference>
<feature type="chain" id="PRO_1000073026" description="Universal stress protein B homolog">
    <location>
        <begin position="1"/>
        <end position="107"/>
    </location>
</feature>
<feature type="transmembrane region" description="Helical" evidence="1">
    <location>
        <begin position="6"/>
        <end position="25"/>
    </location>
</feature>
<feature type="transmembrane region" description="Helical" evidence="1">
    <location>
        <begin position="89"/>
        <end position="106"/>
    </location>
</feature>
<name>USPB_VIBC3</name>
<evidence type="ECO:0000255" key="1">
    <source>
        <dbReference type="HAMAP-Rule" id="MF_01088"/>
    </source>
</evidence>
<keyword id="KW-0997">Cell inner membrane</keyword>
<keyword id="KW-1003">Cell membrane</keyword>
<keyword id="KW-0472">Membrane</keyword>
<keyword id="KW-0812">Transmembrane</keyword>
<keyword id="KW-1133">Transmembrane helix</keyword>
<comment type="subcellular location">
    <subcellularLocation>
        <location evidence="1">Cell inner membrane</location>
        <topology evidence="1">Multi-pass membrane protein</topology>
    </subcellularLocation>
</comment>
<comment type="similarity">
    <text evidence="1">Belongs to the universal stress protein B family.</text>
</comment>
<organism>
    <name type="scientific">Vibrio cholerae serotype O1 (strain ATCC 39541 / Classical Ogawa 395 / O395)</name>
    <dbReference type="NCBI Taxonomy" id="345073"/>
    <lineage>
        <taxon>Bacteria</taxon>
        <taxon>Pseudomonadati</taxon>
        <taxon>Pseudomonadota</taxon>
        <taxon>Gammaproteobacteria</taxon>
        <taxon>Vibrionales</taxon>
        <taxon>Vibrionaceae</taxon>
        <taxon>Vibrio</taxon>
    </lineage>
</organism>
<sequence length="107" mass="12338">MISGDTILFALMLVTAINVARYVTALRSLIYIMREAHPLLYQQVDGRGFFTTHGNVTKQVRLYHYLKSREYHHHHDPVFTGKCDRVRELFILSGSLLVLTTVVAFML</sequence>